<keyword id="KW-0965">Cell junction</keyword>
<keyword id="KW-1003">Cell membrane</keyword>
<keyword id="KW-0966">Cell projection</keyword>
<keyword id="KW-0407">Ion channel</keyword>
<keyword id="KW-0406">Ion transport</keyword>
<keyword id="KW-0472">Membrane</keyword>
<keyword id="KW-0479">Metal-binding</keyword>
<keyword id="KW-0597">Phosphoprotein</keyword>
<keyword id="KW-0628">Postsynaptic cell membrane</keyword>
<keyword id="KW-0630">Potassium</keyword>
<keyword id="KW-0631">Potassium channel</keyword>
<keyword id="KW-0633">Potassium transport</keyword>
<keyword id="KW-1185">Reference proteome</keyword>
<keyword id="KW-0770">Synapse</keyword>
<keyword id="KW-0812">Transmembrane</keyword>
<keyword id="KW-1133">Transmembrane helix</keyword>
<keyword id="KW-0813">Transport</keyword>
<keyword id="KW-0851">Voltage-gated channel</keyword>
<keyword id="KW-0862">Zinc</keyword>
<comment type="function">
    <text evidence="2 3 4">Voltage-gated potassium channel that mediates transmembrane potassium transport in excitable membranes, primarily in the brain. Mediates the major part of the dendritic A-type current I(SA) in brain neurons (By similarity). This current is activated at membrane potentials that are below the threshold for action potentials. It regulates neuronal excitability, prolongs the latency before the first spike in a series of action potentials, regulates the frequency of repetitive action potential firing, shortens the duration of action potentials and regulates the back-propagation of action potentials from the neuronal cell body to the dendrites. Contributes to the regulation of the circadian rhythm of action potential firing in suprachiasmatic nucleus neurons, which regulates the circadian rhythm of locomotor activity (By similarity). Functions downstream of the metabotropic glutamate receptor GRM5 and plays a role in neuronal excitability and in nociception mediated by activation of GRM5 (By similarity). Mediates the transient outward current I(to) in rodent heart left ventricle apex cells, but not in human heart, where this current is mediated by another family member. Forms tetrameric potassium-selective channels through which potassium ions pass in accordance with their electrochemical gradient (By similarity). The channel alternates between opened and closed conformations in response to the voltage difference across the membrane. Can form functional homotetrameric channels and heterotetrameric channels that contain variable proportions of KCND2 and KCND3; channel properties depend on the type of pore-forming alpha subunits that are part of the channel. In vivo, membranes probably contain a mixture of heteromeric potassium channel complexes. Interaction with specific isoforms of the regulatory subunits KCNIP1, KCNIP2, KCNIP3 or KCNIP4 strongly increases expression at the cell surface and thereby increases channel activity; it modulates the kinetics of channel activation and inactivation, shifts the threshold for channel activation to more negative voltage values, shifts the threshold for inactivation to less negative voltages and accelerates recovery after inactivation (By similarity). Likewise, interaction with DPP6 or DPP10 promotes expression at the cell membrane and regulates both channel characteristics and activity (By similarity). Upon depolarization, the channel goes from a resting closed state (C state) to an activated but non-conducting state (C* state), from there, the channel may either inactivate (I state) or open (O state) (By similarity).</text>
</comment>
<comment type="catalytic activity">
    <reaction evidence="3">
        <text>K(+)(in) = K(+)(out)</text>
        <dbReference type="Rhea" id="RHEA:29463"/>
        <dbReference type="ChEBI" id="CHEBI:29103"/>
    </reaction>
</comment>
<comment type="biophysicochemical properties">
    <kinetics>
        <text evidence="8">Homotetrameric channels activate rapidly, i.e within a few msec. After that, they inactivate rapidly, i.e within about 50-100 msec. The voltage-dependence of activation and inactivation and other channel characteristics vary depending on the experimental conditions, the expression system and the presence or absence of ancillary subunits. Homotetrameric channels have a unitary conductance of about 4 pS when expressed in a heterologous system. For the activation of homotetrameric channels expressed in xenopus oocytes, the voltage at half-maximal amplitude is about -10 mV. The time constant for inactivation is about 20 msec. For inactivation, the voltage at half-maximal amplitude is -62 mV. The time constant for recovery after inactivation is about 70 msec.</text>
    </kinetics>
</comment>
<comment type="subunit">
    <text evidence="2 3 4">Homotetramer or heterotetramer with KCND1 or KCND3. Associates with the regulatory subunits KCNIP1, KCNIP2, KCNIP3 and KCNIP4. Interacts with DPP6, DPP10, DLG4 and DLG1. In vivo, probably exists as heteromeric complex containing variable proportions of KCND1, KCND2, KCND3, KCNIP1, KCNIP2, KCNIP3, KCNIP4, DPP6 and DPP10 (By similarity). The tetrameric channel can associate with up to four regulatory subunits, such as KCNIP2 or KCNIP4 (By similarity). Interaction with KCNIP3 promotes tetramerization and formation of a functional potassium channel (By similarity). Interaction with four KCNIP4 chains does not reduce interaction with DPP10 (By similarity). Probably part of a complex consisting of KCNIP1, KCNIP2 isoform 3 and KCND2 (By similarity). Interacts with FLNA and FLNC (By similarity). Interacts with NCS1/FREQ (By similarity). Identified in a complex with cAMP-dependent protein kinase (PKA), CAV3, AKAP6 and KCND3 in cardiac myocytes (By similarity). Interacts (via S1 and S2 helices) with DPP6; this interaction stabilizes the conformation of the S1-S2 helices and facilitates S4 conformational change, including S4 sliding up and down, thereby accelerating activation, inactivation, and recovery (By similarity).</text>
</comment>
<comment type="subcellular location">
    <subcellularLocation>
        <location evidence="2">Cell membrane</location>
        <topology evidence="2">Multi-pass membrane protein</topology>
    </subcellularLocation>
    <subcellularLocation>
        <location evidence="2">Cell projection</location>
        <location evidence="2">Dendrite</location>
    </subcellularLocation>
    <subcellularLocation>
        <location evidence="2">Synapse</location>
    </subcellularLocation>
    <subcellularLocation>
        <location evidence="2">Perikaryon</location>
    </subcellularLocation>
    <subcellularLocation>
        <location evidence="2">Postsynaptic cell membrane</location>
    </subcellularLocation>
    <subcellularLocation>
        <location evidence="2">Cell projection</location>
        <location evidence="2">Dendritic spine</location>
    </subcellularLocation>
    <subcellularLocation>
        <location evidence="2">Cell membrane</location>
        <location evidence="2">Sarcolemma</location>
    </subcellularLocation>
    <subcellularLocation>
        <location evidence="2">Cell junction</location>
    </subcellularLocation>
    <subcellularLocation>
        <location evidence="2">Membrane</location>
        <location evidence="2">Caveola</location>
    </subcellularLocation>
    <text evidence="2 4">In neurons, primarily detected on dendrites, dendritic spines and on the neuron cell body, but not on axons. Localized preferentially at the dendrites of pyramidal cells in the hippocampus CA1 layer. Detectedat GABAergic synapses. Detected at cell junctions that are distinct from synaptic cell contacts. Detected in lipid rafts. Detected primarily at the endoplasmic reticulum or Golgi when expressed by itself. Interaction with KCNIP1, KCNIP2, KCNIP3 or KCNIP4 promotes expression at the cell membrane. Interaction with DPP6 or DPP10 promotes expression at the cell membrane (By similarity). Internalized from the cell membrane by clathrin-dependent endocytosis in response to activation of AMPA-selective glutamate receptors and PKA-mediated phosphorylation at Ser-552. Redistributed from dendritic spines to the main dendritic shaft in response to activation of AMPA-selective glutamate receptors and activation of PKA (By similarity).</text>
</comment>
<comment type="tissue specificity">
    <text evidence="6">Detected in brain frontal cortex.</text>
</comment>
<comment type="domain">
    <text evidence="1">The transmembrane segment S4 functions as a voltage-sensor and is characterized by a series of positively charged amino acids at every third position. Channel opening and closing is effected by a conformation change that affects the position and orientation of the voltage-sensor paddle formed by S3 and S4 within the membrane. A transmembrane electric field that is positive inside would push the positively charged S4 segment outwards, thereby opening the pore, while a field that is negative inside would pull the S4 segment inwards and close the pore. Changes in the position and orientation of S4 are then transmitted to the activation gate formed by the inner helix bundle via the S4-S5 linker region.</text>
</comment>
<comment type="domain">
    <text evidence="2 3">The N-terminal cytoplasmic region can mediate N-type inactivation by physically blocking the channel. This probably does not happen in vivo, where the N-terminal region mediates interaction with regulatory subunits, such as KCNIP1 and KCNIP2 (By similarity). The zinc binding sites in the N-terminal domain are important for tetramerization and assembly of a functional channel complex (By similarity). The channel undergoes closed-state inactivation, where conformation changes lead to inactivation through an intermediate state involving breakdown of its 4-fold symmetry. that governs the distinct transient, fast-inactivating currents (By similarity).</text>
</comment>
<comment type="domain">
    <text evidence="2">The C-terminal cytoplasmic region is important for normal expression at the cell membrane and modulates the voltage-dependence of channel activation and inactivation. It is required for interaction with KCNIP2, and probably other family members as well.</text>
</comment>
<comment type="PTM">
    <text evidence="2 4">Phosphorylation at Ser-438 in response to MAPK activation is increased in stimulated dendrites. Interaction with KCNIP2 and DPP6 propomtes phosphorylation by PKA at Ser-552. Phosphorylation at Ser-552 has no effect on interaction with KCNIP3, but is required for the regulation of channel activity by KCNIP3. Phosphorylation at Ser-552 leads to KCND2 internalization (By similarity). Phosphorylated by MAPK in response to signaling via the metabotropic glutamate receptor GRM5 (By similarity). Phosphorylation at Ser-616 is required for the down-regulation of neuronal A-type currents in response to signaling via GRM5 (By similarity).</text>
</comment>
<comment type="miscellaneous">
    <text evidence="2 8 9">The transient neuronal A-type potassium current called I(SA) is triggered at membrane potentials that are below the threshold for action potentials. It inactivates rapidly and recovers rapidly from inactivation. It regulates the firing of action potentials and plays a role in synaptic integration and plasticity. Potassium channels containing KCND2 account for about 80% of the neuronal A-type potassium current. In contrast, the potassium channel responsible for the cardiac I(to) current differs between species; it is mediated by KCND2 in rodents. In human and other non-rodents KCND3 may play an equivalent role.</text>
</comment>
<comment type="miscellaneous">
    <text evidence="2">Is specifically and reversibly inhibited by the scorpion toxin Ts8 (AC P69940).</text>
</comment>
<comment type="similarity">
    <text evidence="7">Belongs to the potassium channel family. D (Shal) (TC 1.A.1.2) subfamily. Kv4.2/KCND2 sub-subfamily.</text>
</comment>
<name>KCND2_RABIT</name>
<gene>
    <name evidence="3" type="primary">KCND2</name>
</gene>
<reference key="1">
    <citation type="submission" date="2002-05" db="EMBL/GenBank/DDBJ databases">
        <authorList>
            <person name="Rae J.L."/>
        </authorList>
    </citation>
    <scope>NUCLEOTIDE SEQUENCE [MRNA]</scope>
    <source>
        <strain>New Zealand white</strain>
        <tissue>Cornea</tissue>
    </source>
</reference>
<reference key="2">
    <citation type="journal article" date="2002" name="J. Physiol. (Lond.)">
        <title>Molecular identification of Kv alpha subunits that contribute to the oxygen-sensitive K(+) current of chemoreceptor cells of the rabbit carotid body.</title>
        <authorList>
            <person name="Sanchez D."/>
            <person name="Lopez-Lopez J.R."/>
            <person name="Perez-Garcia M.T."/>
            <person name="Sanz-Alfayate G."/>
            <person name="Obeso A."/>
            <person name="Ganfornina M.D."/>
            <person name="Gonzalez C."/>
        </authorList>
    </citation>
    <scope>NUCLEOTIDE SEQUENCE [MRNA] OF 15-614</scope>
    <scope>TISSUE SPECIFICITY</scope>
</reference>
<reference key="3">
    <citation type="journal article" date="2007" name="Mol. Neurobiol.">
        <title>Ionic channel function in action potential generation: current perspective.</title>
        <authorList>
            <person name="Baranauskas G."/>
        </authorList>
    </citation>
    <scope>REVIEW</scope>
</reference>
<reference key="4">
    <citation type="journal article" date="2008" name="Neurochem. Res.">
        <title>The neuronal Kv4 channel complex.</title>
        <authorList>
            <person name="Covarrubias M."/>
            <person name="Bhattacharji A."/>
            <person name="De Santiago-Castillo J.A."/>
            <person name="Dougherty K."/>
            <person name="Kaulin Y.A."/>
            <person name="Na-Phuket T.R."/>
            <person name="Wang G."/>
        </authorList>
    </citation>
    <scope>REVIEW</scope>
</reference>
<protein>
    <recommendedName>
        <fullName evidence="3">A-type voltage-gated potassium channel KCND2</fullName>
    </recommendedName>
    <alternativeName>
        <fullName>Potassium voltage-gated channel subfamily D member 2</fullName>
    </alternativeName>
    <alternativeName>
        <fullName>Voltage-gated potassium channel subunit Kv4.2</fullName>
    </alternativeName>
</protein>
<dbReference type="EMBL" id="AF508735">
    <property type="protein sequence ID" value="AAM46929.1"/>
    <property type="molecule type" value="mRNA"/>
</dbReference>
<dbReference type="EMBL" id="AF493547">
    <property type="protein sequence ID" value="AAM46841.1"/>
    <property type="molecule type" value="mRNA"/>
</dbReference>
<dbReference type="RefSeq" id="NP_001075587.1">
    <property type="nucleotide sequence ID" value="NM_001082118.1"/>
</dbReference>
<dbReference type="SMR" id="P59995"/>
<dbReference type="FunCoup" id="P59995">
    <property type="interactions" value="187"/>
</dbReference>
<dbReference type="STRING" id="9986.ENSOCUP00000003587"/>
<dbReference type="PaxDb" id="9986-ENSOCUP00000003587"/>
<dbReference type="Ensembl" id="ENSOCUT00000004147.3">
    <property type="protein sequence ID" value="ENSOCUP00000003587.3"/>
    <property type="gene ID" value="ENSOCUG00000004149.3"/>
</dbReference>
<dbReference type="GeneID" id="100008841"/>
<dbReference type="KEGG" id="ocu:100008841"/>
<dbReference type="CTD" id="3751"/>
<dbReference type="eggNOG" id="KOG4390">
    <property type="taxonomic scope" value="Eukaryota"/>
</dbReference>
<dbReference type="GeneTree" id="ENSGT00940000155472"/>
<dbReference type="InParanoid" id="P59995"/>
<dbReference type="OrthoDB" id="433309at2759"/>
<dbReference type="Proteomes" id="UP000001811">
    <property type="component" value="Chromosome 7"/>
</dbReference>
<dbReference type="Bgee" id="ENSOCUG00000004149">
    <property type="expression patterns" value="Expressed in prefrontal cortex and 4 other cell types or tissues"/>
</dbReference>
<dbReference type="ExpressionAtlas" id="P59995">
    <property type="expression patterns" value="baseline"/>
</dbReference>
<dbReference type="GO" id="GO:0070161">
    <property type="term" value="C:anchoring junction"/>
    <property type="evidence" value="ECO:0007669"/>
    <property type="project" value="UniProtKB-SubCell"/>
</dbReference>
<dbReference type="GO" id="GO:0005901">
    <property type="term" value="C:caveola"/>
    <property type="evidence" value="ECO:0000250"/>
    <property type="project" value="UniProtKB"/>
</dbReference>
<dbReference type="GO" id="GO:0043197">
    <property type="term" value="C:dendritic spine"/>
    <property type="evidence" value="ECO:0000250"/>
    <property type="project" value="UniProtKB"/>
</dbReference>
<dbReference type="GO" id="GO:0098982">
    <property type="term" value="C:GABA-ergic synapse"/>
    <property type="evidence" value="ECO:0007669"/>
    <property type="project" value="Ensembl"/>
</dbReference>
<dbReference type="GO" id="GO:0098978">
    <property type="term" value="C:glutamatergic synapse"/>
    <property type="evidence" value="ECO:0007669"/>
    <property type="project" value="Ensembl"/>
</dbReference>
<dbReference type="GO" id="GO:0071193">
    <property type="term" value="C:Kv4.2-KChIP2 channel complex"/>
    <property type="evidence" value="ECO:0007669"/>
    <property type="project" value="Ensembl"/>
</dbReference>
<dbReference type="GO" id="GO:0032809">
    <property type="term" value="C:neuronal cell body membrane"/>
    <property type="evidence" value="ECO:0000250"/>
    <property type="project" value="UniProtKB"/>
</dbReference>
<dbReference type="GO" id="GO:0043204">
    <property type="term" value="C:perikaryon"/>
    <property type="evidence" value="ECO:0007669"/>
    <property type="project" value="UniProtKB-SubCell"/>
</dbReference>
<dbReference type="GO" id="GO:0005886">
    <property type="term" value="C:plasma membrane"/>
    <property type="evidence" value="ECO:0000250"/>
    <property type="project" value="UniProtKB"/>
</dbReference>
<dbReference type="GO" id="GO:0044853">
    <property type="term" value="C:plasma membrane raft"/>
    <property type="evidence" value="ECO:0000250"/>
    <property type="project" value="UniProtKB"/>
</dbReference>
<dbReference type="GO" id="GO:0045211">
    <property type="term" value="C:postsynaptic membrane"/>
    <property type="evidence" value="ECO:0000250"/>
    <property type="project" value="UniProtKB"/>
</dbReference>
<dbReference type="GO" id="GO:0099634">
    <property type="term" value="C:postsynaptic specialization membrane"/>
    <property type="evidence" value="ECO:0007669"/>
    <property type="project" value="Ensembl"/>
</dbReference>
<dbReference type="GO" id="GO:0042383">
    <property type="term" value="C:sarcolemma"/>
    <property type="evidence" value="ECO:0000250"/>
    <property type="project" value="UniProtKB"/>
</dbReference>
<dbReference type="GO" id="GO:0030315">
    <property type="term" value="C:T-tubule"/>
    <property type="evidence" value="ECO:0000250"/>
    <property type="project" value="UniProtKB"/>
</dbReference>
<dbReference type="GO" id="GO:0008076">
    <property type="term" value="C:voltage-gated potassium channel complex"/>
    <property type="evidence" value="ECO:0000250"/>
    <property type="project" value="UniProtKB"/>
</dbReference>
<dbReference type="GO" id="GO:0005250">
    <property type="term" value="F:A-type (transient outward) potassium channel activity"/>
    <property type="evidence" value="ECO:0000250"/>
    <property type="project" value="UniProtKB"/>
</dbReference>
<dbReference type="GO" id="GO:0046872">
    <property type="term" value="F:metal ion binding"/>
    <property type="evidence" value="ECO:0007669"/>
    <property type="project" value="UniProtKB-KW"/>
</dbReference>
<dbReference type="GO" id="GO:1905030">
    <property type="term" value="F:voltage-gated monoatomic ion channel activity involved in regulation of postsynaptic membrane potential"/>
    <property type="evidence" value="ECO:0007669"/>
    <property type="project" value="Ensembl"/>
</dbReference>
<dbReference type="GO" id="GO:0005249">
    <property type="term" value="F:voltage-gated potassium channel activity"/>
    <property type="evidence" value="ECO:0000250"/>
    <property type="project" value="UniProtKB"/>
</dbReference>
<dbReference type="GO" id="GO:0086001">
    <property type="term" value="P:cardiac muscle cell action potential"/>
    <property type="evidence" value="ECO:0000250"/>
    <property type="project" value="UniProtKB"/>
</dbReference>
<dbReference type="GO" id="GO:0071456">
    <property type="term" value="P:cellular response to hypoxia"/>
    <property type="evidence" value="ECO:0000250"/>
    <property type="project" value="UniProtKB"/>
</dbReference>
<dbReference type="GO" id="GO:0045475">
    <property type="term" value="P:locomotor rhythm"/>
    <property type="evidence" value="ECO:0007669"/>
    <property type="project" value="Ensembl"/>
</dbReference>
<dbReference type="GO" id="GO:0086009">
    <property type="term" value="P:membrane repolarization"/>
    <property type="evidence" value="ECO:0007669"/>
    <property type="project" value="Ensembl"/>
</dbReference>
<dbReference type="GO" id="GO:0006936">
    <property type="term" value="P:muscle contraction"/>
    <property type="evidence" value="ECO:0007669"/>
    <property type="project" value="Ensembl"/>
</dbReference>
<dbReference type="GO" id="GO:0019228">
    <property type="term" value="P:neuronal action potential"/>
    <property type="evidence" value="ECO:0007669"/>
    <property type="project" value="Ensembl"/>
</dbReference>
<dbReference type="GO" id="GO:0071805">
    <property type="term" value="P:potassium ion transmembrane transport"/>
    <property type="evidence" value="ECO:0000250"/>
    <property type="project" value="UniProtKB"/>
</dbReference>
<dbReference type="GO" id="GO:0051260">
    <property type="term" value="P:protein homooligomerization"/>
    <property type="evidence" value="ECO:0007669"/>
    <property type="project" value="InterPro"/>
</dbReference>
<dbReference type="GO" id="GO:0019233">
    <property type="term" value="P:sensory perception of pain"/>
    <property type="evidence" value="ECO:0007669"/>
    <property type="project" value="Ensembl"/>
</dbReference>
<dbReference type="FunFam" id="1.10.287.70:FF:000073">
    <property type="entry name" value="Potassium voltage-gated channel subfamily D member 2"/>
    <property type="match status" value="1"/>
</dbReference>
<dbReference type="FunFam" id="1.10.287.70:FF:000111">
    <property type="entry name" value="Potassium voltage-gated channel subfamily D member 3"/>
    <property type="match status" value="1"/>
</dbReference>
<dbReference type="FunFam" id="1.20.120.350:FF:000016">
    <property type="entry name" value="Potassium voltage-gated channel subfamily D member 3"/>
    <property type="match status" value="1"/>
</dbReference>
<dbReference type="FunFam" id="3.30.710.10:FF:000004">
    <property type="entry name" value="Potassium voltage-gated channel subfamily D member 3"/>
    <property type="match status" value="1"/>
</dbReference>
<dbReference type="Gene3D" id="1.10.287.70">
    <property type="match status" value="1"/>
</dbReference>
<dbReference type="Gene3D" id="3.30.710.10">
    <property type="entry name" value="Potassium Channel Kv1.1, Chain A"/>
    <property type="match status" value="1"/>
</dbReference>
<dbReference type="Gene3D" id="1.20.120.350">
    <property type="entry name" value="Voltage-gated potassium channels. Chain C"/>
    <property type="match status" value="1"/>
</dbReference>
<dbReference type="InterPro" id="IPR000210">
    <property type="entry name" value="BTB/POZ_dom"/>
</dbReference>
<dbReference type="InterPro" id="IPR005821">
    <property type="entry name" value="Ion_trans_dom"/>
</dbReference>
<dbReference type="InterPro" id="IPR003968">
    <property type="entry name" value="K_chnl_volt-dep_Kv"/>
</dbReference>
<dbReference type="InterPro" id="IPR003975">
    <property type="entry name" value="K_chnl_volt-dep_Kv4"/>
</dbReference>
<dbReference type="InterPro" id="IPR004055">
    <property type="entry name" value="K_chnl_volt-dep_Kv4.2"/>
</dbReference>
<dbReference type="InterPro" id="IPR024587">
    <property type="entry name" value="K_chnl_volt-dep_Kv4_C"/>
</dbReference>
<dbReference type="InterPro" id="IPR021645">
    <property type="entry name" value="Shal-type_N"/>
</dbReference>
<dbReference type="InterPro" id="IPR011333">
    <property type="entry name" value="SKP1/BTB/POZ_sf"/>
</dbReference>
<dbReference type="InterPro" id="IPR003131">
    <property type="entry name" value="T1-type_BTB"/>
</dbReference>
<dbReference type="InterPro" id="IPR028325">
    <property type="entry name" value="VG_K_chnl"/>
</dbReference>
<dbReference type="InterPro" id="IPR027359">
    <property type="entry name" value="Volt_channel_dom_sf"/>
</dbReference>
<dbReference type="PANTHER" id="PTHR11537:SF265">
    <property type="entry name" value="POTASSIUM VOLTAGE-GATED CHANNEL SUBFAMILY D MEMBER 2"/>
    <property type="match status" value="1"/>
</dbReference>
<dbReference type="PANTHER" id="PTHR11537">
    <property type="entry name" value="VOLTAGE-GATED POTASSIUM CHANNEL"/>
    <property type="match status" value="1"/>
</dbReference>
<dbReference type="Pfam" id="PF02214">
    <property type="entry name" value="BTB_2"/>
    <property type="match status" value="1"/>
</dbReference>
<dbReference type="Pfam" id="PF11879">
    <property type="entry name" value="DUF3399"/>
    <property type="match status" value="1"/>
</dbReference>
<dbReference type="Pfam" id="PF00520">
    <property type="entry name" value="Ion_trans"/>
    <property type="match status" value="1"/>
</dbReference>
<dbReference type="Pfam" id="PF11601">
    <property type="entry name" value="Shal-type"/>
    <property type="match status" value="1"/>
</dbReference>
<dbReference type="PRINTS" id="PR00169">
    <property type="entry name" value="KCHANNEL"/>
</dbReference>
<dbReference type="PRINTS" id="PR01517">
    <property type="entry name" value="KV42CHANNEL"/>
</dbReference>
<dbReference type="PRINTS" id="PR01491">
    <property type="entry name" value="KVCHANNEL"/>
</dbReference>
<dbReference type="PRINTS" id="PR01497">
    <property type="entry name" value="SHALCHANNEL"/>
</dbReference>
<dbReference type="SMART" id="SM00225">
    <property type="entry name" value="BTB"/>
    <property type="match status" value="1"/>
</dbReference>
<dbReference type="SUPFAM" id="SSF54695">
    <property type="entry name" value="POZ domain"/>
    <property type="match status" value="1"/>
</dbReference>
<dbReference type="SUPFAM" id="SSF81324">
    <property type="entry name" value="Voltage-gated potassium channels"/>
    <property type="match status" value="1"/>
</dbReference>
<feature type="chain" id="PRO_0000054066" description="A-type voltage-gated potassium channel KCND2">
    <location>
        <begin position="1"/>
        <end position="630"/>
    </location>
</feature>
<feature type="topological domain" description="Cytoplasmic" evidence="3">
    <location>
        <begin position="1"/>
        <end position="184"/>
    </location>
</feature>
<feature type="transmembrane region" description="Helical; Name=Segment S1" evidence="3">
    <location>
        <begin position="185"/>
        <end position="206"/>
    </location>
</feature>
<feature type="topological domain" description="Extracellular" evidence="3">
    <location>
        <begin position="207"/>
        <end position="226"/>
    </location>
</feature>
<feature type="transmembrane region" description="Helical; Name=Segment S2" evidence="3">
    <location>
        <begin position="227"/>
        <end position="249"/>
    </location>
</feature>
<feature type="topological domain" description="Cytoplasmic" evidence="3">
    <location>
        <begin position="250"/>
        <end position="256"/>
    </location>
</feature>
<feature type="transmembrane region" description="Helical; Name=Segment S3" evidence="3">
    <location>
        <begin position="257"/>
        <end position="281"/>
    </location>
</feature>
<feature type="topological domain" description="Extracellular" evidence="3">
    <location>
        <begin position="282"/>
        <end position="287"/>
    </location>
</feature>
<feature type="transmembrane region" description="Helical; Voltage-sensor; Name=Segment S4" evidence="3">
    <location>
        <begin position="288"/>
        <end position="307"/>
    </location>
</feature>
<feature type="topological domain" description="Cytoplasmic" evidence="3">
    <location>
        <begin position="308"/>
        <end position="321"/>
    </location>
</feature>
<feature type="transmembrane region" description="Helical; Name=Segment S5" evidence="3">
    <location>
        <begin position="322"/>
        <end position="345"/>
    </location>
</feature>
<feature type="topological domain" description="Extracellular" evidence="3">
    <location>
        <begin position="346"/>
        <end position="357"/>
    </location>
</feature>
<feature type="intramembrane region" description="Helical; Name=Pore helix" evidence="1">
    <location>
        <begin position="358"/>
        <end position="369"/>
    </location>
</feature>
<feature type="intramembrane region" evidence="1">
    <location>
        <begin position="370"/>
        <end position="377"/>
    </location>
</feature>
<feature type="topological domain" description="Extracellular" evidence="3">
    <location>
        <begin position="378"/>
        <end position="380"/>
    </location>
</feature>
<feature type="transmembrane region" description="Helical; Name=Segment S6" evidence="3">
    <location>
        <begin position="381"/>
        <end position="403"/>
    </location>
</feature>
<feature type="topological domain" description="Cytoplasmic" evidence="3">
    <location>
        <begin position="404"/>
        <end position="630"/>
    </location>
</feature>
<feature type="region of interest" description="Interaction with KCNIP1, KCNIP2, and other family members" evidence="2">
    <location>
        <begin position="2"/>
        <end position="20"/>
    </location>
</feature>
<feature type="region of interest" description="Interaction with KCNIP1" evidence="2">
    <location>
        <begin position="71"/>
        <end position="90"/>
    </location>
</feature>
<feature type="region of interest" description="S4-S5 linker" evidence="1">
    <location>
        <begin position="308"/>
        <end position="321"/>
    </location>
</feature>
<feature type="region of interest" description="Important for normal channel activation and inactivation, for interaction with KCNIP2, and probably other family members as well" evidence="2">
    <location>
        <begin position="474"/>
        <end position="630"/>
    </location>
</feature>
<feature type="region of interest" description="Required for dendritic targeting" evidence="2">
    <location>
        <begin position="474"/>
        <end position="489"/>
    </location>
</feature>
<feature type="region of interest" description="Disordered" evidence="5">
    <location>
        <begin position="600"/>
        <end position="623"/>
    </location>
</feature>
<feature type="short sequence motif" description="Selectivity filter" evidence="1">
    <location>
        <begin position="370"/>
        <end position="375"/>
    </location>
</feature>
<feature type="short sequence motif" description="PDZ-binding" evidence="2">
    <location>
        <begin position="627"/>
        <end position="630"/>
    </location>
</feature>
<feature type="binding site" description="in chain A" evidence="3">
    <location>
        <position position="105"/>
    </location>
    <ligand>
        <name>Zn(2+)</name>
        <dbReference type="ChEBI" id="CHEBI:29105"/>
        <note>ligand shared between homotetrameric partners</note>
    </ligand>
</feature>
<feature type="binding site" description="in chain B" evidence="3">
    <location>
        <position position="111"/>
    </location>
    <ligand>
        <name>Zn(2+)</name>
        <dbReference type="ChEBI" id="CHEBI:29105"/>
        <note>ligand shared between homotetrameric partners</note>
    </ligand>
</feature>
<feature type="binding site" description="in chain A" evidence="3">
    <location>
        <position position="132"/>
    </location>
    <ligand>
        <name>Zn(2+)</name>
        <dbReference type="ChEBI" id="CHEBI:29105"/>
        <note>ligand shared between homotetrameric partners</note>
    </ligand>
</feature>
<feature type="binding site" description="in chain A" evidence="3">
    <location>
        <position position="133"/>
    </location>
    <ligand>
        <name>Zn(2+)</name>
        <dbReference type="ChEBI" id="CHEBI:29105"/>
        <note>ligand shared between homotetrameric partners</note>
    </ligand>
</feature>
<feature type="binding site" evidence="3">
    <location>
        <position position="370"/>
    </location>
    <ligand>
        <name>K(+)</name>
        <dbReference type="ChEBI" id="CHEBI:29103"/>
        <note>ligand shared between homotetrameric partners</note>
    </ligand>
</feature>
<feature type="binding site" evidence="3">
    <location>
        <position position="371"/>
    </location>
    <ligand>
        <name>K(+)</name>
        <dbReference type="ChEBI" id="CHEBI:29103"/>
        <note>ligand shared between homotetrameric partners</note>
    </ligand>
</feature>
<feature type="binding site" evidence="3">
    <location>
        <position position="372"/>
    </location>
    <ligand>
        <name>K(+)</name>
        <dbReference type="ChEBI" id="CHEBI:29103"/>
        <note>ligand shared between homotetrameric partners</note>
    </ligand>
</feature>
<feature type="binding site" evidence="3">
    <location>
        <position position="373"/>
    </location>
    <ligand>
        <name>K(+)</name>
        <dbReference type="ChEBI" id="CHEBI:29103"/>
        <note>ligand shared between homotetrameric partners</note>
    </ligand>
</feature>
<feature type="modified residue" description="Phosphothreonine" evidence="2">
    <location>
        <position position="38"/>
    </location>
</feature>
<feature type="modified residue" description="Phosphoserine" evidence="2">
    <location>
        <position position="438"/>
    </location>
</feature>
<feature type="modified residue" description="Phosphoserine" evidence="2">
    <location>
        <position position="548"/>
    </location>
</feature>
<feature type="modified residue" description="Phosphoserine" evidence="4">
    <location>
        <position position="552"/>
    </location>
</feature>
<feature type="modified residue" description="Phosphoserine" evidence="4">
    <location>
        <position position="572"/>
    </location>
</feature>
<feature type="modified residue" description="Phosphoserine" evidence="4">
    <location>
        <position position="575"/>
    </location>
</feature>
<feature type="modified residue" description="Phosphothreonine" evidence="2">
    <location>
        <position position="602"/>
    </location>
</feature>
<feature type="modified residue" description="Phosphothreonine" evidence="2">
    <location>
        <position position="607"/>
    </location>
</feature>
<feature type="modified residue" description="Phosphoserine" evidence="4">
    <location>
        <position position="616"/>
    </location>
</feature>
<feature type="sequence conflict" description="In Ref. 2; AAM46841." evidence="7" ref="2">
    <original>E</original>
    <variation>K</variation>
    <location>
        <position position="118"/>
    </location>
</feature>
<feature type="sequence conflict" description="In Ref. 2; AAM46841." evidence="7" ref="2">
    <original>K</original>
    <variation>R</variation>
    <location>
        <position position="379"/>
    </location>
</feature>
<organism>
    <name type="scientific">Oryctolagus cuniculus</name>
    <name type="common">Rabbit</name>
    <dbReference type="NCBI Taxonomy" id="9986"/>
    <lineage>
        <taxon>Eukaryota</taxon>
        <taxon>Metazoa</taxon>
        <taxon>Chordata</taxon>
        <taxon>Craniata</taxon>
        <taxon>Vertebrata</taxon>
        <taxon>Euteleostomi</taxon>
        <taxon>Mammalia</taxon>
        <taxon>Eutheria</taxon>
        <taxon>Euarchontoglires</taxon>
        <taxon>Glires</taxon>
        <taxon>Lagomorpha</taxon>
        <taxon>Leporidae</taxon>
        <taxon>Oryctolagus</taxon>
    </lineage>
</organism>
<proteinExistence type="evidence at transcript level"/>
<evidence type="ECO:0000250" key="1">
    <source>
        <dbReference type="UniProtKB" id="P63142"/>
    </source>
</evidence>
<evidence type="ECO:0000250" key="2">
    <source>
        <dbReference type="UniProtKB" id="Q63881"/>
    </source>
</evidence>
<evidence type="ECO:0000250" key="3">
    <source>
        <dbReference type="UniProtKB" id="Q9NZV8"/>
    </source>
</evidence>
<evidence type="ECO:0000250" key="4">
    <source>
        <dbReference type="UniProtKB" id="Q9Z0V2"/>
    </source>
</evidence>
<evidence type="ECO:0000256" key="5">
    <source>
        <dbReference type="SAM" id="MobiDB-lite"/>
    </source>
</evidence>
<evidence type="ECO:0000269" key="6">
    <source>
    </source>
</evidence>
<evidence type="ECO:0000305" key="7"/>
<evidence type="ECO:0000305" key="8">
    <source>
    </source>
</evidence>
<evidence type="ECO:0000305" key="9">
    <source>
    </source>
</evidence>
<sequence>MAAGVAAWLPFARAAAIGWMPVASGPMPAPPRQERKRTQDALIVLNVSGTRFQTWQDTLERYPDTLLGSSERDFFYHPETQQYFFDRDPDIFRHILNFYRTGKLHYPRHECISAYDEELAFFGLIPEIIGDCCYEEYKDRRRENAERLQDDADTDNTCESALPTMTARQRVWRAFENPHTSTMALVFYYVTGFFIAVSVIANVVETVPCGSSPGHIKELPCGERYAVAFFCLDTACVMIFTVEYLLRLAAAPSRYRFVRSVMSIIDVVAILPYYIGLVMTDNEDVSGAFVTLRVFRVFRIFKFSRHSQGLRILGYTLKSCASELGFLLFSLTMAIIIFATVMFYAEKGSSASKFTSIPAAFWYTIVTMTTLGYGDMVPKTIAGKIFGSICSLSGVLVIALPVPVIVSNFSRIYHQNQRADKRRAQKKARLARIRAAKSGSANAYMQSKRNGLLSNQLQSSEEEPAFVSKSGSSFETQHHHLLHCLEKTTNHEFVDEQVFEESCMEVATVNRPSSHSPSLSSQQGVTSTCCSRRHKKTFRIPNANVSGSQRGSVQELSTIQIRCVERTPLSNSRSSLNAKMEECVKLNCEQPYVTTAIISIPTPPVTTPEGDDRPESPEYSGGNIVRVSAL</sequence>
<accession>P59995</accession>